<gene>
    <name evidence="1" type="primary">rpmH</name>
    <name evidence="1" type="synonym">rpl34</name>
    <name type="ordered locus">CYA_2905</name>
</gene>
<dbReference type="EMBL" id="CP000239">
    <property type="protein sequence ID" value="ABD85179.1"/>
    <property type="molecule type" value="Genomic_DNA"/>
</dbReference>
<dbReference type="RefSeq" id="WP_011431673.1">
    <property type="nucleotide sequence ID" value="NC_007775.1"/>
</dbReference>
<dbReference type="SMR" id="Q223N7"/>
<dbReference type="STRING" id="321327.CYA_2905"/>
<dbReference type="KEGG" id="cya:CYA_2905"/>
<dbReference type="eggNOG" id="COG0230">
    <property type="taxonomic scope" value="Bacteria"/>
</dbReference>
<dbReference type="HOGENOM" id="CLU_129938_2_1_3"/>
<dbReference type="Proteomes" id="UP000008818">
    <property type="component" value="Chromosome"/>
</dbReference>
<dbReference type="GO" id="GO:1990904">
    <property type="term" value="C:ribonucleoprotein complex"/>
    <property type="evidence" value="ECO:0007669"/>
    <property type="project" value="UniProtKB-KW"/>
</dbReference>
<dbReference type="GO" id="GO:0005840">
    <property type="term" value="C:ribosome"/>
    <property type="evidence" value="ECO:0007669"/>
    <property type="project" value="UniProtKB-KW"/>
</dbReference>
<dbReference type="GO" id="GO:0003735">
    <property type="term" value="F:structural constituent of ribosome"/>
    <property type="evidence" value="ECO:0007669"/>
    <property type="project" value="InterPro"/>
</dbReference>
<dbReference type="GO" id="GO:0006412">
    <property type="term" value="P:translation"/>
    <property type="evidence" value="ECO:0007669"/>
    <property type="project" value="UniProtKB-UniRule"/>
</dbReference>
<dbReference type="Gene3D" id="1.10.287.3980">
    <property type="match status" value="1"/>
</dbReference>
<dbReference type="HAMAP" id="MF_00391">
    <property type="entry name" value="Ribosomal_bL34"/>
    <property type="match status" value="1"/>
</dbReference>
<dbReference type="InterPro" id="IPR000271">
    <property type="entry name" value="Ribosomal_bL34"/>
</dbReference>
<dbReference type="NCBIfam" id="TIGR01030">
    <property type="entry name" value="rpmH_bact"/>
    <property type="match status" value="1"/>
</dbReference>
<dbReference type="Pfam" id="PF00468">
    <property type="entry name" value="Ribosomal_L34"/>
    <property type="match status" value="1"/>
</dbReference>
<proteinExistence type="inferred from homology"/>
<organism>
    <name type="scientific">Synechococcus sp. (strain JA-3-3Ab)</name>
    <name type="common">Cyanobacteria bacterium Yellowstone A-Prime</name>
    <dbReference type="NCBI Taxonomy" id="321327"/>
    <lineage>
        <taxon>Bacteria</taxon>
        <taxon>Bacillati</taxon>
        <taxon>Cyanobacteriota</taxon>
        <taxon>Cyanophyceae</taxon>
        <taxon>Synechococcales</taxon>
        <taxon>Synechococcaceae</taxon>
        <taxon>Synechococcus</taxon>
    </lineage>
</organism>
<protein>
    <recommendedName>
        <fullName evidence="1">Large ribosomal subunit protein bL34</fullName>
    </recommendedName>
    <alternativeName>
        <fullName evidence="3">50S ribosomal protein L34</fullName>
    </alternativeName>
</protein>
<keyword id="KW-0687">Ribonucleoprotein</keyword>
<keyword id="KW-0689">Ribosomal protein</keyword>
<reference key="1">
    <citation type="journal article" date="2007" name="ISME J.">
        <title>Population level functional diversity in a microbial community revealed by comparative genomic and metagenomic analyses.</title>
        <authorList>
            <person name="Bhaya D."/>
            <person name="Grossman A.R."/>
            <person name="Steunou A.-S."/>
            <person name="Khuri N."/>
            <person name="Cohan F.M."/>
            <person name="Hamamura N."/>
            <person name="Melendrez M.C."/>
            <person name="Bateson M.M."/>
            <person name="Ward D.M."/>
            <person name="Heidelberg J.F."/>
        </authorList>
    </citation>
    <scope>NUCLEOTIDE SEQUENCE [LARGE SCALE GENOMIC DNA]</scope>
    <source>
        <strain>JA-3-3Ab</strain>
    </source>
</reference>
<evidence type="ECO:0000255" key="1">
    <source>
        <dbReference type="HAMAP-Rule" id="MF_00391"/>
    </source>
</evidence>
<evidence type="ECO:0000256" key="2">
    <source>
        <dbReference type="SAM" id="MobiDB-lite"/>
    </source>
</evidence>
<evidence type="ECO:0000305" key="3"/>
<name>RL34_SYNJA</name>
<sequence length="46" mass="5517">MTQRTLRGTNRRRIRVSGFRARMRTASGRQVLRRRRAKGRYRLAVS</sequence>
<comment type="similarity">
    <text evidence="1">Belongs to the bacterial ribosomal protein bL34 family.</text>
</comment>
<accession>Q223N7</accession>
<feature type="chain" id="PRO_1000013473" description="Large ribosomal subunit protein bL34">
    <location>
        <begin position="1"/>
        <end position="46"/>
    </location>
</feature>
<feature type="region of interest" description="Disordered" evidence="2">
    <location>
        <begin position="25"/>
        <end position="46"/>
    </location>
</feature>
<feature type="compositionally biased region" description="Basic residues" evidence="2">
    <location>
        <begin position="31"/>
        <end position="46"/>
    </location>
</feature>